<name>TTCA2_FRATW</name>
<proteinExistence type="inferred from homology"/>
<sequence length="251" mass="28788">MTKTEKKLRHYITKAIADYKLLDKGDKVMLCLSGGKDSFGLLKVLHGLIEDKTYDIDLHVYTLDQSQPGWDDSQLRKYLDDLGVSYEIETKNTYGVIIDKVPEGKTYCSLCSRLRRGNIYRYAKEHKMDKIILGHHHDDLIQSLLMSILYQGQIKSMPPKFVTQDGENTVIRPMVLVQERDLIEFAKEENFPIIPCNLCGSQENLKRKKVKKLIQDLALENPKVPSNILNSLSNVLPSHLMDKNLLNSLEN</sequence>
<feature type="chain" id="PRO_0000348743" description="tRNA-cytidine(32) 2-sulfurtransferase 2">
    <location>
        <begin position="1"/>
        <end position="251"/>
    </location>
</feature>
<feature type="short sequence motif" description="PP-loop motif" evidence="1">
    <location>
        <begin position="33"/>
        <end position="38"/>
    </location>
</feature>
<feature type="binding site" evidence="1">
    <location>
        <position position="108"/>
    </location>
    <ligand>
        <name>[4Fe-4S] cluster</name>
        <dbReference type="ChEBI" id="CHEBI:49883"/>
    </ligand>
</feature>
<feature type="binding site" evidence="1">
    <location>
        <position position="111"/>
    </location>
    <ligand>
        <name>[4Fe-4S] cluster</name>
        <dbReference type="ChEBI" id="CHEBI:49883"/>
    </ligand>
</feature>
<feature type="binding site" evidence="1">
    <location>
        <position position="199"/>
    </location>
    <ligand>
        <name>[4Fe-4S] cluster</name>
        <dbReference type="ChEBI" id="CHEBI:49883"/>
    </ligand>
</feature>
<organism>
    <name type="scientific">Francisella tularensis subsp. tularensis (strain WY96-3418)</name>
    <dbReference type="NCBI Taxonomy" id="418136"/>
    <lineage>
        <taxon>Bacteria</taxon>
        <taxon>Pseudomonadati</taxon>
        <taxon>Pseudomonadota</taxon>
        <taxon>Gammaproteobacteria</taxon>
        <taxon>Thiotrichales</taxon>
        <taxon>Francisellaceae</taxon>
        <taxon>Francisella</taxon>
    </lineage>
</organism>
<comment type="function">
    <text evidence="1">Catalyzes the ATP-dependent 2-thiolation of cytidine in position 32 of tRNA, to form 2-thiocytidine (s(2)C32). The sulfur atoms are provided by the cysteine/cysteine desulfurase (IscS) system.</text>
</comment>
<comment type="catalytic activity">
    <reaction evidence="1">
        <text>cytidine(32) in tRNA + S-sulfanyl-L-cysteinyl-[cysteine desulfurase] + AH2 + ATP = 2-thiocytidine(32) in tRNA + L-cysteinyl-[cysteine desulfurase] + A + AMP + diphosphate + H(+)</text>
        <dbReference type="Rhea" id="RHEA:57048"/>
        <dbReference type="Rhea" id="RHEA-COMP:10288"/>
        <dbReference type="Rhea" id="RHEA-COMP:12157"/>
        <dbReference type="Rhea" id="RHEA-COMP:12158"/>
        <dbReference type="Rhea" id="RHEA-COMP:14821"/>
        <dbReference type="ChEBI" id="CHEBI:13193"/>
        <dbReference type="ChEBI" id="CHEBI:15378"/>
        <dbReference type="ChEBI" id="CHEBI:17499"/>
        <dbReference type="ChEBI" id="CHEBI:29950"/>
        <dbReference type="ChEBI" id="CHEBI:30616"/>
        <dbReference type="ChEBI" id="CHEBI:33019"/>
        <dbReference type="ChEBI" id="CHEBI:61963"/>
        <dbReference type="ChEBI" id="CHEBI:82748"/>
        <dbReference type="ChEBI" id="CHEBI:141453"/>
        <dbReference type="ChEBI" id="CHEBI:456215"/>
    </reaction>
    <physiologicalReaction direction="left-to-right" evidence="1">
        <dbReference type="Rhea" id="RHEA:57049"/>
    </physiologicalReaction>
</comment>
<comment type="cofactor">
    <cofactor evidence="1">
        <name>Mg(2+)</name>
        <dbReference type="ChEBI" id="CHEBI:18420"/>
    </cofactor>
</comment>
<comment type="cofactor">
    <cofactor evidence="1">
        <name>[4Fe-4S] cluster</name>
        <dbReference type="ChEBI" id="CHEBI:49883"/>
    </cofactor>
    <text evidence="1">Binds 1 [4Fe-4S] cluster per subunit. The cluster is chelated by three Cys residues, the fourth Fe has a free coordination site that may bind a sulfur atom transferred from the persulfide of IscS.</text>
</comment>
<comment type="pathway">
    <text evidence="1">tRNA modification.</text>
</comment>
<comment type="subunit">
    <text evidence="1">Homodimer.</text>
</comment>
<comment type="subcellular location">
    <subcellularLocation>
        <location evidence="1">Cytoplasm</location>
    </subcellularLocation>
</comment>
<comment type="miscellaneous">
    <text evidence="1">The thiolation reaction likely consists of two steps: a first activation step by ATP to form an adenylated intermediate of the target base of tRNA, and a second nucleophilic substitution step of the sulfur (S) atom supplied by the hydrosulfide attached to the Fe-S cluster.</text>
</comment>
<comment type="similarity">
    <text evidence="1">Belongs to the TtcA family.</text>
</comment>
<gene>
    <name evidence="1" type="primary">ttcA2</name>
    <name type="ordered locus">FTW_1235</name>
</gene>
<accession>A4IYL5</accession>
<dbReference type="EC" id="2.8.1.-" evidence="1"/>
<dbReference type="EMBL" id="CP000608">
    <property type="protein sequence ID" value="ABO47016.1"/>
    <property type="molecule type" value="Genomic_DNA"/>
</dbReference>
<dbReference type="SMR" id="A4IYL5"/>
<dbReference type="KEGG" id="ftw:FTW_1235"/>
<dbReference type="HOGENOM" id="CLU_026481_0_0_6"/>
<dbReference type="GO" id="GO:0005737">
    <property type="term" value="C:cytoplasm"/>
    <property type="evidence" value="ECO:0007669"/>
    <property type="project" value="UniProtKB-SubCell"/>
</dbReference>
<dbReference type="GO" id="GO:0051539">
    <property type="term" value="F:4 iron, 4 sulfur cluster binding"/>
    <property type="evidence" value="ECO:0007669"/>
    <property type="project" value="UniProtKB-UniRule"/>
</dbReference>
<dbReference type="GO" id="GO:0005524">
    <property type="term" value="F:ATP binding"/>
    <property type="evidence" value="ECO:0007669"/>
    <property type="project" value="UniProtKB-UniRule"/>
</dbReference>
<dbReference type="GO" id="GO:0000287">
    <property type="term" value="F:magnesium ion binding"/>
    <property type="evidence" value="ECO:0007669"/>
    <property type="project" value="UniProtKB-UniRule"/>
</dbReference>
<dbReference type="GO" id="GO:0016783">
    <property type="term" value="F:sulfurtransferase activity"/>
    <property type="evidence" value="ECO:0007669"/>
    <property type="project" value="UniProtKB-UniRule"/>
</dbReference>
<dbReference type="GO" id="GO:0000049">
    <property type="term" value="F:tRNA binding"/>
    <property type="evidence" value="ECO:0007669"/>
    <property type="project" value="UniProtKB-KW"/>
</dbReference>
<dbReference type="GO" id="GO:0034227">
    <property type="term" value="P:tRNA thio-modification"/>
    <property type="evidence" value="ECO:0007669"/>
    <property type="project" value="UniProtKB-UniRule"/>
</dbReference>
<dbReference type="CDD" id="cd24138">
    <property type="entry name" value="TtcA-like"/>
    <property type="match status" value="1"/>
</dbReference>
<dbReference type="Gene3D" id="3.40.50.620">
    <property type="entry name" value="HUPs"/>
    <property type="match status" value="1"/>
</dbReference>
<dbReference type="HAMAP" id="MF_01850">
    <property type="entry name" value="TtcA"/>
    <property type="match status" value="1"/>
</dbReference>
<dbReference type="InterPro" id="IPR014729">
    <property type="entry name" value="Rossmann-like_a/b/a_fold"/>
</dbReference>
<dbReference type="InterPro" id="IPR011063">
    <property type="entry name" value="TilS/TtcA_N"/>
</dbReference>
<dbReference type="InterPro" id="IPR012089">
    <property type="entry name" value="tRNA_Cyd_32_2_STrfase"/>
</dbReference>
<dbReference type="InterPro" id="IPR035107">
    <property type="entry name" value="tRNA_thiolation_TtcA_Ctu1"/>
</dbReference>
<dbReference type="NCBIfam" id="NF007972">
    <property type="entry name" value="PRK10696.1"/>
    <property type="match status" value="1"/>
</dbReference>
<dbReference type="PANTHER" id="PTHR43686:SF1">
    <property type="entry name" value="AMINOTRAN_5 DOMAIN-CONTAINING PROTEIN"/>
    <property type="match status" value="1"/>
</dbReference>
<dbReference type="PANTHER" id="PTHR43686">
    <property type="entry name" value="SULFURTRANSFERASE-RELATED"/>
    <property type="match status" value="1"/>
</dbReference>
<dbReference type="Pfam" id="PF01171">
    <property type="entry name" value="ATP_bind_3"/>
    <property type="match status" value="1"/>
</dbReference>
<dbReference type="PIRSF" id="PIRSF004976">
    <property type="entry name" value="ATPase_YdaO"/>
    <property type="match status" value="1"/>
</dbReference>
<dbReference type="SUPFAM" id="SSF52402">
    <property type="entry name" value="Adenine nucleotide alpha hydrolases-like"/>
    <property type="match status" value="1"/>
</dbReference>
<reference key="1">
    <citation type="journal article" date="2007" name="PLoS ONE">
        <title>Complete genomic characterization of a pathogenic A.II strain of Francisella tularensis subspecies tularensis.</title>
        <authorList>
            <person name="Beckstrom-Sternberg S.M."/>
            <person name="Auerbach R.K."/>
            <person name="Godbole S."/>
            <person name="Pearson J.V."/>
            <person name="Beckstrom-Sternberg J.S."/>
            <person name="Deng Z."/>
            <person name="Munk C."/>
            <person name="Kubota K."/>
            <person name="Zhou Y."/>
            <person name="Bruce D."/>
            <person name="Noronha J."/>
            <person name="Scheuermann R.H."/>
            <person name="Wang A."/>
            <person name="Wei X."/>
            <person name="Wang J."/>
            <person name="Hao J."/>
            <person name="Wagner D.M."/>
            <person name="Brettin T.S."/>
            <person name="Brown N."/>
            <person name="Gilna P."/>
            <person name="Keim P.S."/>
        </authorList>
    </citation>
    <scope>NUCLEOTIDE SEQUENCE [LARGE SCALE GENOMIC DNA]</scope>
    <source>
        <strain>WY96-3418</strain>
    </source>
</reference>
<keyword id="KW-0004">4Fe-4S</keyword>
<keyword id="KW-0067">ATP-binding</keyword>
<keyword id="KW-0963">Cytoplasm</keyword>
<keyword id="KW-0408">Iron</keyword>
<keyword id="KW-0411">Iron-sulfur</keyword>
<keyword id="KW-0460">Magnesium</keyword>
<keyword id="KW-0479">Metal-binding</keyword>
<keyword id="KW-0547">Nucleotide-binding</keyword>
<keyword id="KW-0694">RNA-binding</keyword>
<keyword id="KW-0808">Transferase</keyword>
<keyword id="KW-0819">tRNA processing</keyword>
<keyword id="KW-0820">tRNA-binding</keyword>
<protein>
    <recommendedName>
        <fullName evidence="1">tRNA-cytidine(32) 2-sulfurtransferase 2</fullName>
        <ecNumber evidence="1">2.8.1.-</ecNumber>
    </recommendedName>
    <alternativeName>
        <fullName evidence="1">Two-thiocytidine biosynthesis protein A 2</fullName>
    </alternativeName>
    <alternativeName>
        <fullName evidence="1">tRNA 2-thiocytidine biosynthesis protein TtcA 2</fullName>
    </alternativeName>
</protein>
<evidence type="ECO:0000255" key="1">
    <source>
        <dbReference type="HAMAP-Rule" id="MF_01850"/>
    </source>
</evidence>